<keyword id="KW-0106">Calcium</keyword>
<keyword id="KW-0903">Direct protein sequencing</keyword>
<keyword id="KW-1015">Disulfide bond</keyword>
<keyword id="KW-0378">Hydrolase</keyword>
<keyword id="KW-0442">Lipid degradation</keyword>
<keyword id="KW-0443">Lipid metabolism</keyword>
<keyword id="KW-0479">Metal-binding</keyword>
<keyword id="KW-0964">Secreted</keyword>
<keyword id="KW-0732">Signal</keyword>
<comment type="function">
    <text evidence="6">Snake venom phospholipase A2 (PLA2) that has enzymatic activity but is non-toxic. Displays low binding affinity and enzymatic activity on phosphatidylserine-containing vesicles and HEK-293 plasma membranes, in contrast to ammodytoxins that have high activity on these phospholipids. PLA2 catalyzes the calcium-dependent hydrolysis of the 2-acyl groups in 3-sn-phosphoglycerides.</text>
</comment>
<comment type="catalytic activity">
    <reaction evidence="3 4 6">
        <text>a 1,2-diacyl-sn-glycero-3-phosphocholine + H2O = a 1-acyl-sn-glycero-3-phosphocholine + a fatty acid + H(+)</text>
        <dbReference type="Rhea" id="RHEA:15801"/>
        <dbReference type="ChEBI" id="CHEBI:15377"/>
        <dbReference type="ChEBI" id="CHEBI:15378"/>
        <dbReference type="ChEBI" id="CHEBI:28868"/>
        <dbReference type="ChEBI" id="CHEBI:57643"/>
        <dbReference type="ChEBI" id="CHEBI:58168"/>
        <dbReference type="EC" id="3.1.1.4"/>
    </reaction>
</comment>
<comment type="cofactor">
    <cofactor evidence="6">
        <name>Ca(2+)</name>
        <dbReference type="ChEBI" id="CHEBI:29108"/>
    </cofactor>
    <text evidence="6">Binds 1 Ca(2+) ion.</text>
</comment>
<comment type="subcellular location">
    <subcellularLocation>
        <location evidence="5">Secreted</location>
    </subcellularLocation>
</comment>
<comment type="tissue specificity">
    <text evidence="10">Expressed by the venom gland.</text>
</comment>
<comment type="similarity">
    <text evidence="9">Belongs to the phospholipase A2 family. Group II subfamily. D49 sub-subfamily.</text>
</comment>
<evidence type="ECO:0000250" key="1"/>
<evidence type="ECO:0000250" key="2">
    <source>
        <dbReference type="UniProtKB" id="Q910A1"/>
    </source>
</evidence>
<evidence type="ECO:0000255" key="3">
    <source>
        <dbReference type="PROSITE-ProRule" id="PRU10035"/>
    </source>
</evidence>
<evidence type="ECO:0000255" key="4">
    <source>
        <dbReference type="PROSITE-ProRule" id="PRU10036"/>
    </source>
</evidence>
<evidence type="ECO:0000269" key="5">
    <source>
    </source>
</evidence>
<evidence type="ECO:0000269" key="6">
    <source>
    </source>
</evidence>
<evidence type="ECO:0000303" key="7">
    <source>
    </source>
</evidence>
<evidence type="ECO:0000303" key="8">
    <source>
    </source>
</evidence>
<evidence type="ECO:0000305" key="9"/>
<evidence type="ECO:0000305" key="10">
    <source>
    </source>
</evidence>
<name>PA2N2_VIPAA</name>
<feature type="signal peptide" evidence="5">
    <location>
        <begin position="1"/>
        <end position="16"/>
    </location>
</feature>
<feature type="chain" id="PRO_0000022973" description="Neutral phospholipase A2 ammodytin I2">
    <location>
        <begin position="17"/>
        <end position="137"/>
    </location>
</feature>
<feature type="active site" evidence="1">
    <location>
        <position position="63"/>
    </location>
</feature>
<feature type="active site" evidence="1">
    <location>
        <position position="105"/>
    </location>
</feature>
<feature type="binding site" evidence="1">
    <location>
        <position position="43"/>
    </location>
    <ligand>
        <name>Ca(2+)</name>
        <dbReference type="ChEBI" id="CHEBI:29108"/>
    </ligand>
</feature>
<feature type="binding site" evidence="1">
    <location>
        <position position="45"/>
    </location>
    <ligand>
        <name>Ca(2+)</name>
        <dbReference type="ChEBI" id="CHEBI:29108"/>
    </ligand>
</feature>
<feature type="binding site" evidence="1">
    <location>
        <position position="47"/>
    </location>
    <ligand>
        <name>Ca(2+)</name>
        <dbReference type="ChEBI" id="CHEBI:29108"/>
    </ligand>
</feature>
<feature type="binding site" evidence="1">
    <location>
        <position position="64"/>
    </location>
    <ligand>
        <name>Ca(2+)</name>
        <dbReference type="ChEBI" id="CHEBI:29108"/>
    </ligand>
</feature>
<feature type="disulfide bond" evidence="1">
    <location>
        <begin position="42"/>
        <end position="131"/>
    </location>
</feature>
<feature type="disulfide bond" evidence="1">
    <location>
        <begin position="44"/>
        <end position="60"/>
    </location>
</feature>
<feature type="disulfide bond" evidence="1">
    <location>
        <begin position="59"/>
        <end position="111"/>
    </location>
</feature>
<feature type="disulfide bond" evidence="1">
    <location>
        <begin position="65"/>
        <end position="137"/>
    </location>
</feature>
<feature type="disulfide bond" evidence="1">
    <location>
        <begin position="66"/>
        <end position="104"/>
    </location>
</feature>
<feature type="disulfide bond" evidence="1">
    <location>
        <begin position="73"/>
        <end position="97"/>
    </location>
</feature>
<feature type="disulfide bond" evidence="1">
    <location>
        <begin position="91"/>
        <end position="102"/>
    </location>
</feature>
<accession>P34180</accession>
<accession>Q9I967</accession>
<dbReference type="EC" id="3.1.1.4"/>
<dbReference type="EMBL" id="X56878">
    <property type="protein sequence ID" value="CAA40200.2"/>
    <property type="molecule type" value="mRNA"/>
</dbReference>
<dbReference type="EMBL" id="X84018">
    <property type="protein sequence ID" value="CAA58840.1"/>
    <property type="molecule type" value="Genomic_DNA"/>
</dbReference>
<dbReference type="PIR" id="S22388">
    <property type="entry name" value="S22388"/>
</dbReference>
<dbReference type="SMR" id="P34180"/>
<dbReference type="GO" id="GO:0005576">
    <property type="term" value="C:extracellular region"/>
    <property type="evidence" value="ECO:0007669"/>
    <property type="project" value="UniProtKB-SubCell"/>
</dbReference>
<dbReference type="GO" id="GO:0005509">
    <property type="term" value="F:calcium ion binding"/>
    <property type="evidence" value="ECO:0007669"/>
    <property type="project" value="InterPro"/>
</dbReference>
<dbReference type="GO" id="GO:0047498">
    <property type="term" value="F:calcium-dependent phospholipase A2 activity"/>
    <property type="evidence" value="ECO:0007669"/>
    <property type="project" value="TreeGrafter"/>
</dbReference>
<dbReference type="GO" id="GO:0005543">
    <property type="term" value="F:phospholipid binding"/>
    <property type="evidence" value="ECO:0007669"/>
    <property type="project" value="TreeGrafter"/>
</dbReference>
<dbReference type="GO" id="GO:0050482">
    <property type="term" value="P:arachidonate secretion"/>
    <property type="evidence" value="ECO:0007669"/>
    <property type="project" value="InterPro"/>
</dbReference>
<dbReference type="GO" id="GO:0016042">
    <property type="term" value="P:lipid catabolic process"/>
    <property type="evidence" value="ECO:0007669"/>
    <property type="project" value="UniProtKB-KW"/>
</dbReference>
<dbReference type="GO" id="GO:0006644">
    <property type="term" value="P:phospholipid metabolic process"/>
    <property type="evidence" value="ECO:0007669"/>
    <property type="project" value="InterPro"/>
</dbReference>
<dbReference type="CDD" id="cd00125">
    <property type="entry name" value="PLA2c"/>
    <property type="match status" value="1"/>
</dbReference>
<dbReference type="FunFam" id="1.20.90.10:FF:000001">
    <property type="entry name" value="Basic phospholipase A2 homolog"/>
    <property type="match status" value="1"/>
</dbReference>
<dbReference type="Gene3D" id="1.20.90.10">
    <property type="entry name" value="Phospholipase A2 domain"/>
    <property type="match status" value="1"/>
</dbReference>
<dbReference type="InterPro" id="IPR001211">
    <property type="entry name" value="PLipase_A2"/>
</dbReference>
<dbReference type="InterPro" id="IPR033112">
    <property type="entry name" value="PLipase_A2_Asp_AS"/>
</dbReference>
<dbReference type="InterPro" id="IPR016090">
    <property type="entry name" value="PLipase_A2_dom"/>
</dbReference>
<dbReference type="InterPro" id="IPR036444">
    <property type="entry name" value="PLipase_A2_dom_sf"/>
</dbReference>
<dbReference type="InterPro" id="IPR033113">
    <property type="entry name" value="PLipase_A2_His_AS"/>
</dbReference>
<dbReference type="PANTHER" id="PTHR11716:SF101">
    <property type="entry name" value="BASIC PHOSPHOLIPASE A2 PA-11-LIKE"/>
    <property type="match status" value="1"/>
</dbReference>
<dbReference type="PANTHER" id="PTHR11716">
    <property type="entry name" value="PHOSPHOLIPASE A2 FAMILY MEMBER"/>
    <property type="match status" value="1"/>
</dbReference>
<dbReference type="Pfam" id="PF00068">
    <property type="entry name" value="Phospholip_A2_1"/>
    <property type="match status" value="1"/>
</dbReference>
<dbReference type="PRINTS" id="PR00389">
    <property type="entry name" value="PHPHLIPASEA2"/>
</dbReference>
<dbReference type="SMART" id="SM00085">
    <property type="entry name" value="PA2c"/>
    <property type="match status" value="1"/>
</dbReference>
<dbReference type="SUPFAM" id="SSF48619">
    <property type="entry name" value="Phospholipase A2, PLA2"/>
    <property type="match status" value="1"/>
</dbReference>
<dbReference type="PROSITE" id="PS00119">
    <property type="entry name" value="PA2_ASP"/>
    <property type="match status" value="1"/>
</dbReference>
<dbReference type="PROSITE" id="PS00118">
    <property type="entry name" value="PA2_HIS"/>
    <property type="match status" value="1"/>
</dbReference>
<organism>
    <name type="scientific">Vipera ammodytes ammodytes</name>
    <name type="common">Western sand viper</name>
    <dbReference type="NCBI Taxonomy" id="8705"/>
    <lineage>
        <taxon>Eukaryota</taxon>
        <taxon>Metazoa</taxon>
        <taxon>Chordata</taxon>
        <taxon>Craniata</taxon>
        <taxon>Vertebrata</taxon>
        <taxon>Euteleostomi</taxon>
        <taxon>Lepidosauria</taxon>
        <taxon>Squamata</taxon>
        <taxon>Bifurcata</taxon>
        <taxon>Unidentata</taxon>
        <taxon>Episquamata</taxon>
        <taxon>Toxicofera</taxon>
        <taxon>Serpentes</taxon>
        <taxon>Colubroidea</taxon>
        <taxon>Viperidae</taxon>
        <taxon>Viperinae</taxon>
        <taxon>Vipera</taxon>
    </lineage>
</organism>
<protein>
    <recommendedName>
        <fullName evidence="7 8">Neutral phospholipase A2 ammodytin I2</fullName>
        <shortName evidence="2">AmI2</shortName>
        <shortName>AmdI1</shortName>
        <shortName evidence="8">AtnI2</shortName>
        <shortName>svPLA2</shortName>
        <ecNumber>3.1.1.4</ecNumber>
    </recommendedName>
    <alternativeName>
        <fullName>Phosphatidylcholine 2-acylhydrolase</fullName>
    </alternativeName>
</protein>
<proteinExistence type="evidence at protein level"/>
<sequence>MRTLWIVAVCLIGVEGNLYQFGNMIFKMTKKSALLSYSNYGCYCGWGGKGKPQDATDRCCFVHDCCYGRVNGCDPKLSIYSYSFENGDIVCGGDDPCLRAVCECDRVAAICFGENLNTYDKKYKNYPSSHCTETEQC</sequence>
<reference key="1">
    <citation type="journal article" date="1992" name="Eur. J. Biochem.">
        <title>Amino acid and cDNA sequences of a neutral phospholipase A2 from the long-nosed viper (Vipera ammodytes ammodytes) venom.</title>
        <authorList>
            <person name="Krizaj I."/>
            <person name="Liang N.-S."/>
            <person name="Pungercar J."/>
            <person name="Strukelj B."/>
            <person name="Ritonja A."/>
            <person name="Gubensek F."/>
        </authorList>
    </citation>
    <scope>NUCLEOTIDE SEQUENCE [MRNA]</scope>
    <scope>PROTEIN SEQUENCE OF 17-137</scope>
    <scope>SUBCELLULAR LOCATION</scope>
    <source>
        <tissue>Venom</tissue>
        <tissue>Venom gland</tissue>
    </source>
</reference>
<reference key="2">
    <citation type="submission" date="1999-08" db="EMBL/GenBank/DDBJ databases">
        <authorList>
            <person name="Pungercar J."/>
        </authorList>
    </citation>
    <scope>SEQUENCE REVISION TO 132</scope>
</reference>
<reference key="3">
    <citation type="submission" date="1995-01" db="EMBL/GenBank/DDBJ databases">
        <title>Molecular evolution of phospholipase A2 multigene family in Vipera ammodytes.</title>
        <authorList>
            <person name="Kordis D."/>
            <person name="Gubensek F."/>
        </authorList>
    </citation>
    <scope>NUCLEOTIDE SEQUENCE [GENOMIC DNA]</scope>
</reference>
<reference key="4">
    <citation type="journal article" date="2005" name="Biochemistry">
        <title>Ammodytoxins, potent presynaptic neurotoxins, are also highly efficient phospholipase A2 enzymes.</title>
        <authorList>
            <person name="Petan T."/>
            <person name="Krizaj I."/>
            <person name="Gelb M.H."/>
            <person name="Pungercar J."/>
        </authorList>
    </citation>
    <scope>FUNCTION</scope>
    <scope>CATALYTIC ACTIVITY</scope>
    <scope>COFACTOR</scope>
    <source>
        <tissue>Venom</tissue>
    </source>
</reference>